<evidence type="ECO:0000255" key="1">
    <source>
        <dbReference type="HAMAP-Rule" id="MF_00394"/>
    </source>
</evidence>
<organism>
    <name type="scientific">Rhizobium etli (strain CIAT 652)</name>
    <dbReference type="NCBI Taxonomy" id="491916"/>
    <lineage>
        <taxon>Bacteria</taxon>
        <taxon>Pseudomonadati</taxon>
        <taxon>Pseudomonadota</taxon>
        <taxon>Alphaproteobacteria</taxon>
        <taxon>Hyphomicrobiales</taxon>
        <taxon>Rhizobiaceae</taxon>
        <taxon>Rhizobium/Agrobacterium group</taxon>
        <taxon>Rhizobium</taxon>
    </lineage>
</organism>
<protein>
    <recommendedName>
        <fullName evidence="1">Glycerol-3-phosphate dehydrogenase [NAD(P)+]</fullName>
        <ecNumber evidence="1">1.1.1.94</ecNumber>
    </recommendedName>
    <alternativeName>
        <fullName evidence="1">NAD(P)(+)-dependent glycerol-3-phosphate dehydrogenase</fullName>
    </alternativeName>
    <alternativeName>
        <fullName evidence="1">NAD(P)H-dependent dihydroxyacetone-phosphate reductase</fullName>
    </alternativeName>
</protein>
<proteinExistence type="inferred from homology"/>
<name>GPDA_RHIE6</name>
<dbReference type="EC" id="1.1.1.94" evidence="1"/>
<dbReference type="EMBL" id="CP001074">
    <property type="protein sequence ID" value="ACE93115.1"/>
    <property type="molecule type" value="Genomic_DNA"/>
</dbReference>
<dbReference type="SMR" id="B3PQA3"/>
<dbReference type="KEGG" id="rec:RHECIAT_CH0004186"/>
<dbReference type="eggNOG" id="COG0240">
    <property type="taxonomic scope" value="Bacteria"/>
</dbReference>
<dbReference type="HOGENOM" id="CLU_033449_0_2_5"/>
<dbReference type="UniPathway" id="UPA00940"/>
<dbReference type="Proteomes" id="UP000008817">
    <property type="component" value="Chromosome"/>
</dbReference>
<dbReference type="GO" id="GO:0005829">
    <property type="term" value="C:cytosol"/>
    <property type="evidence" value="ECO:0007669"/>
    <property type="project" value="TreeGrafter"/>
</dbReference>
<dbReference type="GO" id="GO:0047952">
    <property type="term" value="F:glycerol-3-phosphate dehydrogenase [NAD(P)+] activity"/>
    <property type="evidence" value="ECO:0007669"/>
    <property type="project" value="UniProtKB-UniRule"/>
</dbReference>
<dbReference type="GO" id="GO:0051287">
    <property type="term" value="F:NAD binding"/>
    <property type="evidence" value="ECO:0007669"/>
    <property type="project" value="InterPro"/>
</dbReference>
<dbReference type="GO" id="GO:0005975">
    <property type="term" value="P:carbohydrate metabolic process"/>
    <property type="evidence" value="ECO:0007669"/>
    <property type="project" value="InterPro"/>
</dbReference>
<dbReference type="GO" id="GO:0046167">
    <property type="term" value="P:glycerol-3-phosphate biosynthetic process"/>
    <property type="evidence" value="ECO:0007669"/>
    <property type="project" value="UniProtKB-UniRule"/>
</dbReference>
<dbReference type="GO" id="GO:0046168">
    <property type="term" value="P:glycerol-3-phosphate catabolic process"/>
    <property type="evidence" value="ECO:0007669"/>
    <property type="project" value="InterPro"/>
</dbReference>
<dbReference type="GO" id="GO:0006650">
    <property type="term" value="P:glycerophospholipid metabolic process"/>
    <property type="evidence" value="ECO:0007669"/>
    <property type="project" value="UniProtKB-UniRule"/>
</dbReference>
<dbReference type="GO" id="GO:0008654">
    <property type="term" value="P:phospholipid biosynthetic process"/>
    <property type="evidence" value="ECO:0007669"/>
    <property type="project" value="UniProtKB-KW"/>
</dbReference>
<dbReference type="FunFam" id="3.40.50.720:FF:000019">
    <property type="entry name" value="Glycerol-3-phosphate dehydrogenase [NAD(P)+]"/>
    <property type="match status" value="1"/>
</dbReference>
<dbReference type="Gene3D" id="1.10.1040.10">
    <property type="entry name" value="N-(1-d-carboxylethyl)-l-norvaline Dehydrogenase, domain 2"/>
    <property type="match status" value="1"/>
</dbReference>
<dbReference type="Gene3D" id="3.40.50.720">
    <property type="entry name" value="NAD(P)-binding Rossmann-like Domain"/>
    <property type="match status" value="1"/>
</dbReference>
<dbReference type="HAMAP" id="MF_00394">
    <property type="entry name" value="NAD_Glyc3P_dehydrog"/>
    <property type="match status" value="1"/>
</dbReference>
<dbReference type="InterPro" id="IPR008927">
    <property type="entry name" value="6-PGluconate_DH-like_C_sf"/>
</dbReference>
<dbReference type="InterPro" id="IPR013328">
    <property type="entry name" value="6PGD_dom2"/>
</dbReference>
<dbReference type="InterPro" id="IPR006168">
    <property type="entry name" value="G3P_DH_NAD-dep"/>
</dbReference>
<dbReference type="InterPro" id="IPR006109">
    <property type="entry name" value="G3P_DH_NAD-dep_C"/>
</dbReference>
<dbReference type="InterPro" id="IPR011128">
    <property type="entry name" value="G3P_DH_NAD-dep_N"/>
</dbReference>
<dbReference type="InterPro" id="IPR036291">
    <property type="entry name" value="NAD(P)-bd_dom_sf"/>
</dbReference>
<dbReference type="NCBIfam" id="NF000940">
    <property type="entry name" value="PRK00094.1-2"/>
    <property type="match status" value="1"/>
</dbReference>
<dbReference type="NCBIfam" id="NF000942">
    <property type="entry name" value="PRK00094.1-4"/>
    <property type="match status" value="1"/>
</dbReference>
<dbReference type="PANTHER" id="PTHR11728">
    <property type="entry name" value="GLYCEROL-3-PHOSPHATE DEHYDROGENASE"/>
    <property type="match status" value="1"/>
</dbReference>
<dbReference type="PANTHER" id="PTHR11728:SF1">
    <property type="entry name" value="GLYCEROL-3-PHOSPHATE DEHYDROGENASE [NAD(+)] 2, CHLOROPLASTIC"/>
    <property type="match status" value="1"/>
</dbReference>
<dbReference type="Pfam" id="PF07479">
    <property type="entry name" value="NAD_Gly3P_dh_C"/>
    <property type="match status" value="1"/>
</dbReference>
<dbReference type="Pfam" id="PF01210">
    <property type="entry name" value="NAD_Gly3P_dh_N"/>
    <property type="match status" value="1"/>
</dbReference>
<dbReference type="PIRSF" id="PIRSF000114">
    <property type="entry name" value="Glycerol-3-P_dh"/>
    <property type="match status" value="1"/>
</dbReference>
<dbReference type="PRINTS" id="PR00077">
    <property type="entry name" value="GPDHDRGNASE"/>
</dbReference>
<dbReference type="SUPFAM" id="SSF48179">
    <property type="entry name" value="6-phosphogluconate dehydrogenase C-terminal domain-like"/>
    <property type="match status" value="1"/>
</dbReference>
<dbReference type="SUPFAM" id="SSF51735">
    <property type="entry name" value="NAD(P)-binding Rossmann-fold domains"/>
    <property type="match status" value="1"/>
</dbReference>
<dbReference type="PROSITE" id="PS00957">
    <property type="entry name" value="NAD_G3PDH"/>
    <property type="match status" value="1"/>
</dbReference>
<keyword id="KW-0963">Cytoplasm</keyword>
<keyword id="KW-0444">Lipid biosynthesis</keyword>
<keyword id="KW-0443">Lipid metabolism</keyword>
<keyword id="KW-0520">NAD</keyword>
<keyword id="KW-0521">NADP</keyword>
<keyword id="KW-0547">Nucleotide-binding</keyword>
<keyword id="KW-0560">Oxidoreductase</keyword>
<keyword id="KW-0594">Phospholipid biosynthesis</keyword>
<keyword id="KW-1208">Phospholipid metabolism</keyword>
<accession>B3PQA3</accession>
<sequence length="327" mass="33426">MSERIAVIGSGAFGTALAAVIALAGRSPVILVGRNPSLVADLKAERLHDAVLPGIALPESLEFSAEAEAIAGASIVLFAMPSQAQADAARQYGPYLSKDAVVVTCAKGIERTTGNLLTDMLERELPDHPVAVLSGPGFAADIAKGLPTAMAIAAADMETAERLAQAISGRTFRLYASDDRIGVQLGGALKNVLAIACGIVEGRGIGESARAALIARGLAEMSRFVVAKGGQADTVRGLSGLGDLVLTGTSHQSRNLRFGIALGRGEKADPLQGALVEGALAASVASRLAAALSISMPITDAVSAIIDGRLEIADAIEQLMTRPITTE</sequence>
<reference key="1">
    <citation type="journal article" date="2010" name="Appl. Environ. Microbiol.">
        <title>Conserved symbiotic plasmid DNA sequences in the multireplicon pangenomic structure of Rhizobium etli.</title>
        <authorList>
            <person name="Gonzalez V."/>
            <person name="Acosta J.L."/>
            <person name="Santamaria R.I."/>
            <person name="Bustos P."/>
            <person name="Fernandez J.L."/>
            <person name="Hernandez Gonzalez I.L."/>
            <person name="Diaz R."/>
            <person name="Flores M."/>
            <person name="Palacios R."/>
            <person name="Mora J."/>
            <person name="Davila G."/>
        </authorList>
    </citation>
    <scope>NUCLEOTIDE SEQUENCE [LARGE SCALE GENOMIC DNA]</scope>
    <source>
        <strain>CIAT 652</strain>
    </source>
</reference>
<comment type="function">
    <text evidence="1">Catalyzes the reduction of the glycolytic intermediate dihydroxyacetone phosphate (DHAP) to sn-glycerol 3-phosphate (G3P), the key precursor for phospholipid synthesis.</text>
</comment>
<comment type="catalytic activity">
    <reaction evidence="1">
        <text>sn-glycerol 3-phosphate + NAD(+) = dihydroxyacetone phosphate + NADH + H(+)</text>
        <dbReference type="Rhea" id="RHEA:11092"/>
        <dbReference type="ChEBI" id="CHEBI:15378"/>
        <dbReference type="ChEBI" id="CHEBI:57540"/>
        <dbReference type="ChEBI" id="CHEBI:57597"/>
        <dbReference type="ChEBI" id="CHEBI:57642"/>
        <dbReference type="ChEBI" id="CHEBI:57945"/>
        <dbReference type="EC" id="1.1.1.94"/>
    </reaction>
    <physiologicalReaction direction="right-to-left" evidence="1">
        <dbReference type="Rhea" id="RHEA:11094"/>
    </physiologicalReaction>
</comment>
<comment type="catalytic activity">
    <reaction evidence="1">
        <text>sn-glycerol 3-phosphate + NADP(+) = dihydroxyacetone phosphate + NADPH + H(+)</text>
        <dbReference type="Rhea" id="RHEA:11096"/>
        <dbReference type="ChEBI" id="CHEBI:15378"/>
        <dbReference type="ChEBI" id="CHEBI:57597"/>
        <dbReference type="ChEBI" id="CHEBI:57642"/>
        <dbReference type="ChEBI" id="CHEBI:57783"/>
        <dbReference type="ChEBI" id="CHEBI:58349"/>
        <dbReference type="EC" id="1.1.1.94"/>
    </reaction>
    <physiologicalReaction direction="right-to-left" evidence="1">
        <dbReference type="Rhea" id="RHEA:11098"/>
    </physiologicalReaction>
</comment>
<comment type="pathway">
    <text evidence="1">Membrane lipid metabolism; glycerophospholipid metabolism.</text>
</comment>
<comment type="subcellular location">
    <subcellularLocation>
        <location evidence="1">Cytoplasm</location>
    </subcellularLocation>
</comment>
<comment type="similarity">
    <text evidence="1">Belongs to the NAD-dependent glycerol-3-phosphate dehydrogenase family.</text>
</comment>
<gene>
    <name evidence="1" type="primary">gpsA</name>
    <name type="ordered locus">RHECIAT_CH0004186</name>
</gene>
<feature type="chain" id="PRO_1000123176" description="Glycerol-3-phosphate dehydrogenase [NAD(P)+]">
    <location>
        <begin position="1"/>
        <end position="327"/>
    </location>
</feature>
<feature type="active site" description="Proton acceptor" evidence="1">
    <location>
        <position position="190"/>
    </location>
</feature>
<feature type="binding site" evidence="1">
    <location>
        <position position="13"/>
    </location>
    <ligand>
        <name>NADPH</name>
        <dbReference type="ChEBI" id="CHEBI:57783"/>
    </ligand>
</feature>
<feature type="binding site" evidence="1">
    <location>
        <position position="34"/>
    </location>
    <ligand>
        <name>NADPH</name>
        <dbReference type="ChEBI" id="CHEBI:57783"/>
    </ligand>
</feature>
<feature type="binding site" evidence="1">
    <location>
        <position position="107"/>
    </location>
    <ligand>
        <name>NADPH</name>
        <dbReference type="ChEBI" id="CHEBI:57783"/>
    </ligand>
</feature>
<feature type="binding site" evidence="1">
    <location>
        <position position="107"/>
    </location>
    <ligand>
        <name>sn-glycerol 3-phosphate</name>
        <dbReference type="ChEBI" id="CHEBI:57597"/>
    </ligand>
</feature>
<feature type="binding site" evidence="1">
    <location>
        <position position="135"/>
    </location>
    <ligand>
        <name>sn-glycerol 3-phosphate</name>
        <dbReference type="ChEBI" id="CHEBI:57597"/>
    </ligand>
</feature>
<feature type="binding site" evidence="1">
    <location>
        <position position="139"/>
    </location>
    <ligand>
        <name>NADPH</name>
        <dbReference type="ChEBI" id="CHEBI:57783"/>
    </ligand>
</feature>
<feature type="binding site" evidence="1">
    <location>
        <position position="190"/>
    </location>
    <ligand>
        <name>sn-glycerol 3-phosphate</name>
        <dbReference type="ChEBI" id="CHEBI:57597"/>
    </ligand>
</feature>
<feature type="binding site" evidence="1">
    <location>
        <position position="243"/>
    </location>
    <ligand>
        <name>sn-glycerol 3-phosphate</name>
        <dbReference type="ChEBI" id="CHEBI:57597"/>
    </ligand>
</feature>
<feature type="binding site" evidence="1">
    <location>
        <position position="253"/>
    </location>
    <ligand>
        <name>sn-glycerol 3-phosphate</name>
        <dbReference type="ChEBI" id="CHEBI:57597"/>
    </ligand>
</feature>
<feature type="binding site" evidence="1">
    <location>
        <position position="254"/>
    </location>
    <ligand>
        <name>NADPH</name>
        <dbReference type="ChEBI" id="CHEBI:57783"/>
    </ligand>
</feature>
<feature type="binding site" evidence="1">
    <location>
        <position position="254"/>
    </location>
    <ligand>
        <name>sn-glycerol 3-phosphate</name>
        <dbReference type="ChEBI" id="CHEBI:57597"/>
    </ligand>
</feature>
<feature type="binding site" evidence="1">
    <location>
        <position position="255"/>
    </location>
    <ligand>
        <name>sn-glycerol 3-phosphate</name>
        <dbReference type="ChEBI" id="CHEBI:57597"/>
    </ligand>
</feature>
<feature type="binding site" evidence="1">
    <location>
        <position position="276"/>
    </location>
    <ligand>
        <name>NADPH</name>
        <dbReference type="ChEBI" id="CHEBI:57783"/>
    </ligand>
</feature>
<feature type="binding site" evidence="1">
    <location>
        <position position="277"/>
    </location>
    <ligand>
        <name>NADPH</name>
        <dbReference type="ChEBI" id="CHEBI:57783"/>
    </ligand>
</feature>